<gene>
    <name evidence="1" type="primary">smpB</name>
    <name type="ordered locus">CKO_03942</name>
</gene>
<comment type="function">
    <text evidence="1">Required for rescue of stalled ribosomes mediated by trans-translation. Binds to transfer-messenger RNA (tmRNA), required for stable association of tmRNA with ribosomes. tmRNA and SmpB together mimic tRNA shape, replacing the anticodon stem-loop with SmpB. tmRNA is encoded by the ssrA gene; the 2 termini fold to resemble tRNA(Ala) and it encodes a 'tag peptide', a short internal open reading frame. During trans-translation Ala-aminoacylated tmRNA acts like a tRNA, entering the A-site of stalled ribosomes, displacing the stalled mRNA. The ribosome then switches to translate the ORF on the tmRNA; the nascent peptide is terminated with the 'tag peptide' encoded by the tmRNA and targeted for degradation. The ribosome is freed to recommence translation, which seems to be the essential function of trans-translation.</text>
</comment>
<comment type="subcellular location">
    <subcellularLocation>
        <location evidence="1">Cytoplasm</location>
    </subcellularLocation>
    <text evidence="1">The tmRNA-SmpB complex associates with stalled 70S ribosomes.</text>
</comment>
<comment type="similarity">
    <text evidence="1">Belongs to the SmpB family.</text>
</comment>
<organism>
    <name type="scientific">Citrobacter koseri (strain ATCC BAA-895 / CDC 4225-83 / SGSC4696)</name>
    <dbReference type="NCBI Taxonomy" id="290338"/>
    <lineage>
        <taxon>Bacteria</taxon>
        <taxon>Pseudomonadati</taxon>
        <taxon>Pseudomonadota</taxon>
        <taxon>Gammaproteobacteria</taxon>
        <taxon>Enterobacterales</taxon>
        <taxon>Enterobacteriaceae</taxon>
        <taxon>Citrobacter</taxon>
    </lineage>
</organism>
<evidence type="ECO:0000255" key="1">
    <source>
        <dbReference type="HAMAP-Rule" id="MF_00023"/>
    </source>
</evidence>
<protein>
    <recommendedName>
        <fullName evidence="1">SsrA-binding protein</fullName>
    </recommendedName>
    <alternativeName>
        <fullName evidence="1">Small protein B</fullName>
    </alternativeName>
</protein>
<proteinExistence type="inferred from homology"/>
<dbReference type="EMBL" id="CP000822">
    <property type="protein sequence ID" value="ABV15015.1"/>
    <property type="molecule type" value="Genomic_DNA"/>
</dbReference>
<dbReference type="RefSeq" id="WP_012134708.1">
    <property type="nucleotide sequence ID" value="NC_009792.1"/>
</dbReference>
<dbReference type="SMR" id="A8ANF2"/>
<dbReference type="STRING" id="290338.CKO_03942"/>
<dbReference type="GeneID" id="45137604"/>
<dbReference type="KEGG" id="cko:CKO_03942"/>
<dbReference type="HOGENOM" id="CLU_108953_3_0_6"/>
<dbReference type="OrthoDB" id="9805462at2"/>
<dbReference type="Proteomes" id="UP000008148">
    <property type="component" value="Chromosome"/>
</dbReference>
<dbReference type="GO" id="GO:0005829">
    <property type="term" value="C:cytosol"/>
    <property type="evidence" value="ECO:0007669"/>
    <property type="project" value="TreeGrafter"/>
</dbReference>
<dbReference type="GO" id="GO:0003723">
    <property type="term" value="F:RNA binding"/>
    <property type="evidence" value="ECO:0007669"/>
    <property type="project" value="UniProtKB-UniRule"/>
</dbReference>
<dbReference type="GO" id="GO:0070929">
    <property type="term" value="P:trans-translation"/>
    <property type="evidence" value="ECO:0007669"/>
    <property type="project" value="UniProtKB-UniRule"/>
</dbReference>
<dbReference type="CDD" id="cd09294">
    <property type="entry name" value="SmpB"/>
    <property type="match status" value="1"/>
</dbReference>
<dbReference type="FunFam" id="2.40.280.10:FF:000001">
    <property type="entry name" value="SsrA-binding protein"/>
    <property type="match status" value="1"/>
</dbReference>
<dbReference type="Gene3D" id="2.40.280.10">
    <property type="match status" value="1"/>
</dbReference>
<dbReference type="HAMAP" id="MF_00023">
    <property type="entry name" value="SmpB"/>
    <property type="match status" value="1"/>
</dbReference>
<dbReference type="InterPro" id="IPR023620">
    <property type="entry name" value="SmpB"/>
</dbReference>
<dbReference type="InterPro" id="IPR000037">
    <property type="entry name" value="SsrA-bd_prot"/>
</dbReference>
<dbReference type="InterPro" id="IPR020081">
    <property type="entry name" value="SsrA-bd_prot_CS"/>
</dbReference>
<dbReference type="NCBIfam" id="NF003843">
    <property type="entry name" value="PRK05422.1"/>
    <property type="match status" value="1"/>
</dbReference>
<dbReference type="NCBIfam" id="TIGR00086">
    <property type="entry name" value="smpB"/>
    <property type="match status" value="1"/>
</dbReference>
<dbReference type="PANTHER" id="PTHR30308:SF2">
    <property type="entry name" value="SSRA-BINDING PROTEIN"/>
    <property type="match status" value="1"/>
</dbReference>
<dbReference type="PANTHER" id="PTHR30308">
    <property type="entry name" value="TMRNA-BINDING COMPONENT OF TRANS-TRANSLATION TAGGING COMPLEX"/>
    <property type="match status" value="1"/>
</dbReference>
<dbReference type="Pfam" id="PF01668">
    <property type="entry name" value="SmpB"/>
    <property type="match status" value="1"/>
</dbReference>
<dbReference type="SUPFAM" id="SSF74982">
    <property type="entry name" value="Small protein B (SmpB)"/>
    <property type="match status" value="1"/>
</dbReference>
<dbReference type="PROSITE" id="PS01317">
    <property type="entry name" value="SSRP"/>
    <property type="match status" value="1"/>
</dbReference>
<feature type="chain" id="PRO_1000002032" description="SsrA-binding protein">
    <location>
        <begin position="1"/>
        <end position="160"/>
    </location>
</feature>
<name>SSRP_CITK8</name>
<accession>A8ANF2</accession>
<keyword id="KW-0963">Cytoplasm</keyword>
<keyword id="KW-1185">Reference proteome</keyword>
<keyword id="KW-0694">RNA-binding</keyword>
<sequence length="160" mass="18253">MTKKKAHKPGSATIALNKRARHEYFIEEEFEAGLALQGWEVKSLRAGKANISDSYVLLRDGEAYLFGANFTPMAVASTHVVCDPTRTRKLLLNQRELDSLYGRVNREGYTVVALSLYWKNAWCKVKIGVAKGKKQHDKRSDLKEREWQLDKARIMKNAGR</sequence>
<reference key="1">
    <citation type="submission" date="2007-08" db="EMBL/GenBank/DDBJ databases">
        <authorList>
            <consortium name="The Citrobacter koseri Genome Sequencing Project"/>
            <person name="McClelland M."/>
            <person name="Sanderson E.K."/>
            <person name="Porwollik S."/>
            <person name="Spieth J."/>
            <person name="Clifton W.S."/>
            <person name="Latreille P."/>
            <person name="Courtney L."/>
            <person name="Wang C."/>
            <person name="Pepin K."/>
            <person name="Bhonagiri V."/>
            <person name="Nash W."/>
            <person name="Johnson M."/>
            <person name="Thiruvilangam P."/>
            <person name="Wilson R."/>
        </authorList>
    </citation>
    <scope>NUCLEOTIDE SEQUENCE [LARGE SCALE GENOMIC DNA]</scope>
    <source>
        <strain>ATCC BAA-895 / CDC 4225-83 / SGSC4696</strain>
    </source>
</reference>